<keyword id="KW-0460">Magnesium</keyword>
<keyword id="KW-0479">Metal-binding</keyword>
<keyword id="KW-0784">Thiamine biosynthesis</keyword>
<keyword id="KW-0808">Transferase</keyword>
<gene>
    <name evidence="1" type="primary">thiE</name>
    <name type="ordered locus">XF_0378</name>
</gene>
<feature type="chain" id="PRO_0000157064" description="Thiamine-phosphate synthase">
    <location>
        <begin position="1"/>
        <end position="234"/>
    </location>
</feature>
<feature type="binding site" evidence="1">
    <location>
        <begin position="65"/>
        <end position="69"/>
    </location>
    <ligand>
        <name>4-amino-2-methyl-5-(diphosphooxymethyl)pyrimidine</name>
        <dbReference type="ChEBI" id="CHEBI:57841"/>
    </ligand>
</feature>
<feature type="binding site" evidence="1">
    <location>
        <position position="97"/>
    </location>
    <ligand>
        <name>4-amino-2-methyl-5-(diphosphooxymethyl)pyrimidine</name>
        <dbReference type="ChEBI" id="CHEBI:57841"/>
    </ligand>
</feature>
<feature type="binding site" evidence="1">
    <location>
        <position position="98"/>
    </location>
    <ligand>
        <name>Mg(2+)</name>
        <dbReference type="ChEBI" id="CHEBI:18420"/>
    </ligand>
</feature>
<feature type="binding site" evidence="1">
    <location>
        <position position="117"/>
    </location>
    <ligand>
        <name>Mg(2+)</name>
        <dbReference type="ChEBI" id="CHEBI:18420"/>
    </ligand>
</feature>
<feature type="binding site" evidence="1">
    <location>
        <position position="136"/>
    </location>
    <ligand>
        <name>4-amino-2-methyl-5-(diphosphooxymethyl)pyrimidine</name>
        <dbReference type="ChEBI" id="CHEBI:57841"/>
    </ligand>
</feature>
<feature type="binding site" evidence="1">
    <location>
        <begin position="163"/>
        <end position="165"/>
    </location>
    <ligand>
        <name>2-[(2R,5Z)-2-carboxy-4-methylthiazol-5(2H)-ylidene]ethyl phosphate</name>
        <dbReference type="ChEBI" id="CHEBI:62899"/>
    </ligand>
</feature>
<feature type="binding site" evidence="1">
    <location>
        <position position="166"/>
    </location>
    <ligand>
        <name>4-amino-2-methyl-5-(diphosphooxymethyl)pyrimidine</name>
        <dbReference type="ChEBI" id="CHEBI:57841"/>
    </ligand>
</feature>
<feature type="binding site" evidence="1">
    <location>
        <position position="192"/>
    </location>
    <ligand>
        <name>2-[(2R,5Z)-2-carboxy-4-methylthiazol-5(2H)-ylidene]ethyl phosphate</name>
        <dbReference type="ChEBI" id="CHEBI:62899"/>
    </ligand>
</feature>
<feature type="binding site" evidence="1">
    <location>
        <begin position="212"/>
        <end position="213"/>
    </location>
    <ligand>
        <name>2-[(2R,5Z)-2-carboxy-4-methylthiazol-5(2H)-ylidene]ethyl phosphate</name>
        <dbReference type="ChEBI" id="CHEBI:62899"/>
    </ligand>
</feature>
<comment type="function">
    <text evidence="1">Condenses 4-methyl-5-(beta-hydroxyethyl)thiazole monophosphate (THZ-P) and 2-methyl-4-amino-5-hydroxymethyl pyrimidine pyrophosphate (HMP-PP) to form thiamine monophosphate (TMP).</text>
</comment>
<comment type="catalytic activity">
    <reaction evidence="1">
        <text>2-[(2R,5Z)-2-carboxy-4-methylthiazol-5(2H)-ylidene]ethyl phosphate + 4-amino-2-methyl-5-(diphosphooxymethyl)pyrimidine + 2 H(+) = thiamine phosphate + CO2 + diphosphate</text>
        <dbReference type="Rhea" id="RHEA:47844"/>
        <dbReference type="ChEBI" id="CHEBI:15378"/>
        <dbReference type="ChEBI" id="CHEBI:16526"/>
        <dbReference type="ChEBI" id="CHEBI:33019"/>
        <dbReference type="ChEBI" id="CHEBI:37575"/>
        <dbReference type="ChEBI" id="CHEBI:57841"/>
        <dbReference type="ChEBI" id="CHEBI:62899"/>
        <dbReference type="EC" id="2.5.1.3"/>
    </reaction>
</comment>
<comment type="catalytic activity">
    <reaction evidence="1">
        <text>2-(2-carboxy-4-methylthiazol-5-yl)ethyl phosphate + 4-amino-2-methyl-5-(diphosphooxymethyl)pyrimidine + 2 H(+) = thiamine phosphate + CO2 + diphosphate</text>
        <dbReference type="Rhea" id="RHEA:47848"/>
        <dbReference type="ChEBI" id="CHEBI:15378"/>
        <dbReference type="ChEBI" id="CHEBI:16526"/>
        <dbReference type="ChEBI" id="CHEBI:33019"/>
        <dbReference type="ChEBI" id="CHEBI:37575"/>
        <dbReference type="ChEBI" id="CHEBI:57841"/>
        <dbReference type="ChEBI" id="CHEBI:62890"/>
        <dbReference type="EC" id="2.5.1.3"/>
    </reaction>
</comment>
<comment type="catalytic activity">
    <reaction evidence="1">
        <text>4-methyl-5-(2-phosphooxyethyl)-thiazole + 4-amino-2-methyl-5-(diphosphooxymethyl)pyrimidine + H(+) = thiamine phosphate + diphosphate</text>
        <dbReference type="Rhea" id="RHEA:22328"/>
        <dbReference type="ChEBI" id="CHEBI:15378"/>
        <dbReference type="ChEBI" id="CHEBI:33019"/>
        <dbReference type="ChEBI" id="CHEBI:37575"/>
        <dbReference type="ChEBI" id="CHEBI:57841"/>
        <dbReference type="ChEBI" id="CHEBI:58296"/>
        <dbReference type="EC" id="2.5.1.3"/>
    </reaction>
</comment>
<comment type="cofactor">
    <cofactor evidence="1">
        <name>Mg(2+)</name>
        <dbReference type="ChEBI" id="CHEBI:18420"/>
    </cofactor>
    <text evidence="1">Binds 1 Mg(2+) ion per subunit.</text>
</comment>
<comment type="pathway">
    <text evidence="1">Cofactor biosynthesis; thiamine diphosphate biosynthesis; thiamine phosphate from 4-amino-2-methyl-5-diphosphomethylpyrimidine and 4-methyl-5-(2-phosphoethyl)-thiazole: step 1/1.</text>
</comment>
<comment type="similarity">
    <text evidence="1">Belongs to the thiamine-phosphate synthase family.</text>
</comment>
<organism>
    <name type="scientific">Xylella fastidiosa (strain 9a5c)</name>
    <dbReference type="NCBI Taxonomy" id="160492"/>
    <lineage>
        <taxon>Bacteria</taxon>
        <taxon>Pseudomonadati</taxon>
        <taxon>Pseudomonadota</taxon>
        <taxon>Gammaproteobacteria</taxon>
        <taxon>Lysobacterales</taxon>
        <taxon>Lysobacteraceae</taxon>
        <taxon>Xylella</taxon>
    </lineage>
</organism>
<protein>
    <recommendedName>
        <fullName evidence="1">Thiamine-phosphate synthase</fullName>
        <shortName evidence="1">TP synthase</shortName>
        <shortName evidence="1">TPS</shortName>
        <ecNumber evidence="1">2.5.1.3</ecNumber>
    </recommendedName>
    <alternativeName>
        <fullName evidence="1">Thiamine-phosphate pyrophosphorylase</fullName>
        <shortName evidence="1">TMP pyrophosphorylase</shortName>
        <shortName evidence="1">TMP-PPase</shortName>
    </alternativeName>
</protein>
<accession>Q9PGC4</accession>
<reference key="1">
    <citation type="journal article" date="2000" name="Nature">
        <title>The genome sequence of the plant pathogen Xylella fastidiosa.</title>
        <authorList>
            <person name="Simpson A.J.G."/>
            <person name="Reinach F.C."/>
            <person name="Arruda P."/>
            <person name="Abreu F.A."/>
            <person name="Acencio M."/>
            <person name="Alvarenga R."/>
            <person name="Alves L.M.C."/>
            <person name="Araya J.E."/>
            <person name="Baia G.S."/>
            <person name="Baptista C.S."/>
            <person name="Barros M.H."/>
            <person name="Bonaccorsi E.D."/>
            <person name="Bordin S."/>
            <person name="Bove J.M."/>
            <person name="Briones M.R.S."/>
            <person name="Bueno M.R.P."/>
            <person name="Camargo A.A."/>
            <person name="Camargo L.E.A."/>
            <person name="Carraro D.M."/>
            <person name="Carrer H."/>
            <person name="Colauto N.B."/>
            <person name="Colombo C."/>
            <person name="Costa F.F."/>
            <person name="Costa M.C.R."/>
            <person name="Costa-Neto C.M."/>
            <person name="Coutinho L.L."/>
            <person name="Cristofani M."/>
            <person name="Dias-Neto E."/>
            <person name="Docena C."/>
            <person name="El-Dorry H."/>
            <person name="Facincani A.P."/>
            <person name="Ferreira A.J.S."/>
            <person name="Ferreira V.C.A."/>
            <person name="Ferro J.A."/>
            <person name="Fraga J.S."/>
            <person name="Franca S.C."/>
            <person name="Franco M.C."/>
            <person name="Frohme M."/>
            <person name="Furlan L.R."/>
            <person name="Garnier M."/>
            <person name="Goldman G.H."/>
            <person name="Goldman M.H.S."/>
            <person name="Gomes S.L."/>
            <person name="Gruber A."/>
            <person name="Ho P.L."/>
            <person name="Hoheisel J.D."/>
            <person name="Junqueira M.L."/>
            <person name="Kemper E.L."/>
            <person name="Kitajima J.P."/>
            <person name="Krieger J.E."/>
            <person name="Kuramae E.E."/>
            <person name="Laigret F."/>
            <person name="Lambais M.R."/>
            <person name="Leite L.C.C."/>
            <person name="Lemos E.G.M."/>
            <person name="Lemos M.V.F."/>
            <person name="Lopes S.A."/>
            <person name="Lopes C.R."/>
            <person name="Machado J.A."/>
            <person name="Machado M.A."/>
            <person name="Madeira A.M.B.N."/>
            <person name="Madeira H.M.F."/>
            <person name="Marino C.L."/>
            <person name="Marques M.V."/>
            <person name="Martins E.A.L."/>
            <person name="Martins E.M.F."/>
            <person name="Matsukuma A.Y."/>
            <person name="Menck C.F.M."/>
            <person name="Miracca E.C."/>
            <person name="Miyaki C.Y."/>
            <person name="Monteiro-Vitorello C.B."/>
            <person name="Moon D.H."/>
            <person name="Nagai M.A."/>
            <person name="Nascimento A.L.T.O."/>
            <person name="Netto L.E.S."/>
            <person name="Nhani A. Jr."/>
            <person name="Nobrega F.G."/>
            <person name="Nunes L.R."/>
            <person name="Oliveira M.A."/>
            <person name="de Oliveira M.C."/>
            <person name="de Oliveira R.C."/>
            <person name="Palmieri D.A."/>
            <person name="Paris A."/>
            <person name="Peixoto B.R."/>
            <person name="Pereira G.A.G."/>
            <person name="Pereira H.A. Jr."/>
            <person name="Pesquero J.B."/>
            <person name="Quaggio R.B."/>
            <person name="Roberto P.G."/>
            <person name="Rodrigues V."/>
            <person name="de Rosa A.J.M."/>
            <person name="de Rosa V.E. Jr."/>
            <person name="de Sa R.G."/>
            <person name="Santelli R.V."/>
            <person name="Sawasaki H.E."/>
            <person name="da Silva A.C.R."/>
            <person name="da Silva A.M."/>
            <person name="da Silva F.R."/>
            <person name="Silva W.A. Jr."/>
            <person name="da Silveira J.F."/>
            <person name="Silvestri M.L.Z."/>
            <person name="Siqueira W.J."/>
            <person name="de Souza A.A."/>
            <person name="de Souza A.P."/>
            <person name="Terenzi M.F."/>
            <person name="Truffi D."/>
            <person name="Tsai S.M."/>
            <person name="Tsuhako M.H."/>
            <person name="Vallada H."/>
            <person name="Van Sluys M.A."/>
            <person name="Verjovski-Almeida S."/>
            <person name="Vettore A.L."/>
            <person name="Zago M.A."/>
            <person name="Zatz M."/>
            <person name="Meidanis J."/>
            <person name="Setubal J.C."/>
        </authorList>
    </citation>
    <scope>NUCLEOTIDE SEQUENCE [LARGE SCALE GENOMIC DNA]</scope>
    <source>
        <strain>9a5c</strain>
    </source>
</reference>
<name>THIE_XYLFA</name>
<evidence type="ECO:0000255" key="1">
    <source>
        <dbReference type="HAMAP-Rule" id="MF_00097"/>
    </source>
</evidence>
<proteinExistence type="inferred from homology"/>
<dbReference type="EC" id="2.5.1.3" evidence="1"/>
<dbReference type="EMBL" id="AE003849">
    <property type="protein sequence ID" value="AAF83188.1"/>
    <property type="molecule type" value="Genomic_DNA"/>
</dbReference>
<dbReference type="PIR" id="A82814">
    <property type="entry name" value="A82814"/>
</dbReference>
<dbReference type="SMR" id="Q9PGC4"/>
<dbReference type="STRING" id="160492.XF_0378"/>
<dbReference type="KEGG" id="xfa:XF_0378"/>
<dbReference type="eggNOG" id="COG0352">
    <property type="taxonomic scope" value="Bacteria"/>
</dbReference>
<dbReference type="HOGENOM" id="CLU_018272_3_1_6"/>
<dbReference type="UniPathway" id="UPA00060">
    <property type="reaction ID" value="UER00141"/>
</dbReference>
<dbReference type="Proteomes" id="UP000000812">
    <property type="component" value="Chromosome"/>
</dbReference>
<dbReference type="GO" id="GO:0005737">
    <property type="term" value="C:cytoplasm"/>
    <property type="evidence" value="ECO:0007669"/>
    <property type="project" value="TreeGrafter"/>
</dbReference>
<dbReference type="GO" id="GO:0000287">
    <property type="term" value="F:magnesium ion binding"/>
    <property type="evidence" value="ECO:0007669"/>
    <property type="project" value="UniProtKB-UniRule"/>
</dbReference>
<dbReference type="GO" id="GO:0004789">
    <property type="term" value="F:thiamine-phosphate diphosphorylase activity"/>
    <property type="evidence" value="ECO:0007669"/>
    <property type="project" value="UniProtKB-UniRule"/>
</dbReference>
<dbReference type="GO" id="GO:0009228">
    <property type="term" value="P:thiamine biosynthetic process"/>
    <property type="evidence" value="ECO:0007669"/>
    <property type="project" value="UniProtKB-KW"/>
</dbReference>
<dbReference type="GO" id="GO:0009229">
    <property type="term" value="P:thiamine diphosphate biosynthetic process"/>
    <property type="evidence" value="ECO:0007669"/>
    <property type="project" value="UniProtKB-UniRule"/>
</dbReference>
<dbReference type="CDD" id="cd00564">
    <property type="entry name" value="TMP_TenI"/>
    <property type="match status" value="1"/>
</dbReference>
<dbReference type="Gene3D" id="3.20.20.70">
    <property type="entry name" value="Aldolase class I"/>
    <property type="match status" value="1"/>
</dbReference>
<dbReference type="HAMAP" id="MF_00097">
    <property type="entry name" value="TMP_synthase"/>
    <property type="match status" value="1"/>
</dbReference>
<dbReference type="InterPro" id="IPR013785">
    <property type="entry name" value="Aldolase_TIM"/>
</dbReference>
<dbReference type="InterPro" id="IPR036206">
    <property type="entry name" value="ThiamineP_synth_sf"/>
</dbReference>
<dbReference type="InterPro" id="IPR022998">
    <property type="entry name" value="ThiamineP_synth_TenI"/>
</dbReference>
<dbReference type="InterPro" id="IPR034291">
    <property type="entry name" value="TMP_synthase"/>
</dbReference>
<dbReference type="NCBIfam" id="TIGR00693">
    <property type="entry name" value="thiE"/>
    <property type="match status" value="1"/>
</dbReference>
<dbReference type="PANTHER" id="PTHR20857">
    <property type="entry name" value="THIAMINE-PHOSPHATE PYROPHOSPHORYLASE"/>
    <property type="match status" value="1"/>
</dbReference>
<dbReference type="PANTHER" id="PTHR20857:SF15">
    <property type="entry name" value="THIAMINE-PHOSPHATE SYNTHASE"/>
    <property type="match status" value="1"/>
</dbReference>
<dbReference type="Pfam" id="PF02581">
    <property type="entry name" value="TMP-TENI"/>
    <property type="match status" value="1"/>
</dbReference>
<dbReference type="SUPFAM" id="SSF51391">
    <property type="entry name" value="Thiamin phosphate synthase"/>
    <property type="match status" value="1"/>
</dbReference>
<sequence length="234" mass="25334">MEVSRIGSFQEHIDKTTGIVTPHPLLRKPLMSQPRGIYLITPDETDTARLIARTAPLLNGIVWLQYRNKLANTALRTEQAQALLALCRQTGIPLLINDDLELAQTIGADGVHLGMHDSNPSIARAQLGPHAIIGVSCYNQIERAKQAIKAGASYVGFGTFYPSHTKTTPYRATPELLRQTTHLGVPRVAIGGLTPKNIAPIIEAGAELLAVISGIYSAKNPVTALKAYQSQFNI</sequence>